<gene>
    <name type="primary">mt:ATPase8</name>
    <name type="synonym">ATP8</name>
    <name type="synonym">ATPASE8</name>
    <name type="synonym">MT-ATP8</name>
    <name type="synonym">MTATP8</name>
</gene>
<evidence type="ECO:0000250" key="1"/>
<evidence type="ECO:0000255" key="2"/>
<evidence type="ECO:0000305" key="3"/>
<protein>
    <recommendedName>
        <fullName>ATP synthase protein 8</fullName>
    </recommendedName>
    <alternativeName>
        <fullName>A6L</fullName>
    </alternativeName>
    <alternativeName>
        <fullName>F-ATPase subunit 8</fullName>
    </alternativeName>
</protein>
<accession>Q9XMN9</accession>
<proteinExistence type="inferred from homology"/>
<dbReference type="EMBL" id="AJ242872">
    <property type="protein sequence ID" value="CAB45091.1"/>
    <property type="molecule type" value="Genomic_DNA"/>
</dbReference>
<dbReference type="RefSeq" id="NP_008650.1">
    <property type="nucleotide sequence ID" value="NC_000857.1"/>
</dbReference>
<dbReference type="SMR" id="Q9XMN9"/>
<dbReference type="EnsemblMetazoa" id="GeneID_808523_df_mr">
    <property type="protein sequence ID" value="NP_008650.1"/>
    <property type="gene ID" value="GeneID_808523"/>
</dbReference>
<dbReference type="GeneID" id="808523"/>
<dbReference type="KEGG" id="ccat:808523"/>
<dbReference type="CTD" id="4509"/>
<dbReference type="GO" id="GO:0031966">
    <property type="term" value="C:mitochondrial membrane"/>
    <property type="evidence" value="ECO:0007669"/>
    <property type="project" value="UniProtKB-SubCell"/>
</dbReference>
<dbReference type="GO" id="GO:0045259">
    <property type="term" value="C:proton-transporting ATP synthase complex"/>
    <property type="evidence" value="ECO:0007669"/>
    <property type="project" value="UniProtKB-KW"/>
</dbReference>
<dbReference type="GO" id="GO:0015078">
    <property type="term" value="F:proton transmembrane transporter activity"/>
    <property type="evidence" value="ECO:0007669"/>
    <property type="project" value="InterPro"/>
</dbReference>
<dbReference type="GO" id="GO:0015986">
    <property type="term" value="P:proton motive force-driven ATP synthesis"/>
    <property type="evidence" value="ECO:0007669"/>
    <property type="project" value="InterPro"/>
</dbReference>
<dbReference type="InterPro" id="IPR001421">
    <property type="entry name" value="ATP8_metazoa"/>
</dbReference>
<dbReference type="Pfam" id="PF00895">
    <property type="entry name" value="ATP-synt_8"/>
    <property type="match status" value="1"/>
</dbReference>
<comment type="function">
    <text evidence="1">Mitochondrial membrane ATP synthase (F(1)F(0) ATP synthase or Complex V) produces ATP from ADP in the presence of a proton gradient across the membrane which is generated by electron transport complexes of the respiratory chain. F-type ATPases consist of two structural domains, F(1) - containing the extramembraneous catalytic core and F(0) - containing the membrane proton channel, linked together by a central stalk and a peripheral stalk. During catalysis, ATP synthesis in the catalytic domain of F(1) is coupled via a rotary mechanism of the central stalk subunits to proton translocation. Part of the complex F(0) domain. Minor subunit located with subunit a in the membrane (By similarity).</text>
</comment>
<comment type="subunit">
    <text evidence="1">F-type ATPases have 2 components, CF(1) - the catalytic core - and CF(0) - the membrane proton channel.</text>
</comment>
<comment type="subcellular location">
    <subcellularLocation>
        <location>Mitochondrion membrane</location>
        <topology>Single-pass membrane protein</topology>
    </subcellularLocation>
</comment>
<comment type="similarity">
    <text evidence="3">Belongs to the ATPase protein 8 family.</text>
</comment>
<organism>
    <name type="scientific">Ceratitis capitata</name>
    <name type="common">Mediterranean fruit fly</name>
    <name type="synonym">Tephritis capitata</name>
    <dbReference type="NCBI Taxonomy" id="7213"/>
    <lineage>
        <taxon>Eukaryota</taxon>
        <taxon>Metazoa</taxon>
        <taxon>Ecdysozoa</taxon>
        <taxon>Arthropoda</taxon>
        <taxon>Hexapoda</taxon>
        <taxon>Insecta</taxon>
        <taxon>Pterygota</taxon>
        <taxon>Neoptera</taxon>
        <taxon>Endopterygota</taxon>
        <taxon>Diptera</taxon>
        <taxon>Brachycera</taxon>
        <taxon>Muscomorpha</taxon>
        <taxon>Tephritoidea</taxon>
        <taxon>Tephritidae</taxon>
        <taxon>Ceratitis</taxon>
        <taxon>Ceratitis</taxon>
    </lineage>
</organism>
<name>ATP8_CERCA</name>
<keyword id="KW-0066">ATP synthesis</keyword>
<keyword id="KW-0138">CF(0)</keyword>
<keyword id="KW-0375">Hydrogen ion transport</keyword>
<keyword id="KW-0406">Ion transport</keyword>
<keyword id="KW-0472">Membrane</keyword>
<keyword id="KW-0496">Mitochondrion</keyword>
<keyword id="KW-0812">Transmembrane</keyword>
<keyword id="KW-1133">Transmembrane helix</keyword>
<keyword id="KW-0813">Transport</keyword>
<reference key="1">
    <citation type="journal article" date="2000" name="Insect Mol. Biol.">
        <title>The mitochondrial genome of the mediterranean fruit fly, Ceratitis capitata.</title>
        <authorList>
            <person name="Spanos L."/>
            <person name="Koutroumbas G."/>
            <person name="Kotsyfakis M."/>
            <person name="Louis C."/>
        </authorList>
    </citation>
    <scope>NUCLEOTIDE SEQUENCE [GENOMIC DNA]</scope>
</reference>
<feature type="chain" id="PRO_0000195504" description="ATP synthase protein 8">
    <location>
        <begin position="1"/>
        <end position="53"/>
    </location>
</feature>
<feature type="transmembrane region" description="Helical" evidence="2">
    <location>
        <begin position="6"/>
        <end position="26"/>
    </location>
</feature>
<geneLocation type="mitochondrion"/>
<sequence>MPQMAPIGWLSLFIIFSLTFILFSMMNYYSTIPQSPKSQILKKSQTNSMNWKW</sequence>